<organism>
    <name type="scientific">Salmonella typhimurium (strain LT2 / SGSC1412 / ATCC 700720)</name>
    <dbReference type="NCBI Taxonomy" id="99287"/>
    <lineage>
        <taxon>Bacteria</taxon>
        <taxon>Pseudomonadati</taxon>
        <taxon>Pseudomonadota</taxon>
        <taxon>Gammaproteobacteria</taxon>
        <taxon>Enterobacterales</taxon>
        <taxon>Enterobacteriaceae</taxon>
        <taxon>Salmonella</taxon>
    </lineage>
</organism>
<feature type="chain" id="PRO_0000057445" description="tRNA pseudouridine synthase A">
    <location>
        <begin position="1"/>
        <end position="270"/>
    </location>
</feature>
<feature type="active site" description="Nucleophile" evidence="1">
    <location>
        <position position="60"/>
    </location>
</feature>
<feature type="binding site" evidence="1">
    <location>
        <position position="118"/>
    </location>
    <ligand>
        <name>substrate</name>
    </ligand>
</feature>
<proteinExistence type="inferred from homology"/>
<dbReference type="EC" id="5.4.99.12" evidence="1"/>
<dbReference type="EMBL" id="AE006468">
    <property type="protein sequence ID" value="AAL21269.1"/>
    <property type="molecule type" value="Genomic_DNA"/>
</dbReference>
<dbReference type="RefSeq" id="NP_461310.1">
    <property type="nucleotide sequence ID" value="NC_003197.2"/>
</dbReference>
<dbReference type="RefSeq" id="WP_000016626.1">
    <property type="nucleotide sequence ID" value="NC_003197.2"/>
</dbReference>
<dbReference type="SMR" id="Q8ZNB9"/>
<dbReference type="STRING" id="99287.STM2368"/>
<dbReference type="PaxDb" id="99287-STM2368"/>
<dbReference type="GeneID" id="1253890"/>
<dbReference type="KEGG" id="stm:STM2368"/>
<dbReference type="PATRIC" id="fig|99287.12.peg.2507"/>
<dbReference type="HOGENOM" id="CLU_014673_0_2_6"/>
<dbReference type="OMA" id="ADAFCHN"/>
<dbReference type="PhylomeDB" id="Q8ZNB9"/>
<dbReference type="BioCyc" id="SENT99287:STM2368-MONOMER"/>
<dbReference type="Proteomes" id="UP000001014">
    <property type="component" value="Chromosome"/>
</dbReference>
<dbReference type="GO" id="GO:0009982">
    <property type="term" value="F:pseudouridine synthase activity"/>
    <property type="evidence" value="ECO:0000318"/>
    <property type="project" value="GO_Central"/>
</dbReference>
<dbReference type="GO" id="GO:0003723">
    <property type="term" value="F:RNA binding"/>
    <property type="evidence" value="ECO:0007669"/>
    <property type="project" value="InterPro"/>
</dbReference>
<dbReference type="GO" id="GO:0160147">
    <property type="term" value="F:tRNA pseudouridine(38-40) synthase activity"/>
    <property type="evidence" value="ECO:0007669"/>
    <property type="project" value="UniProtKB-EC"/>
</dbReference>
<dbReference type="GO" id="GO:0031119">
    <property type="term" value="P:tRNA pseudouridine synthesis"/>
    <property type="evidence" value="ECO:0000318"/>
    <property type="project" value="GO_Central"/>
</dbReference>
<dbReference type="CDD" id="cd02570">
    <property type="entry name" value="PseudoU_synth_EcTruA"/>
    <property type="match status" value="1"/>
</dbReference>
<dbReference type="FunFam" id="3.30.70.580:FF:000001">
    <property type="entry name" value="tRNA pseudouridine synthase A"/>
    <property type="match status" value="1"/>
</dbReference>
<dbReference type="FunFam" id="3.30.70.660:FF:000001">
    <property type="entry name" value="tRNA pseudouridine synthase A"/>
    <property type="match status" value="1"/>
</dbReference>
<dbReference type="Gene3D" id="3.30.70.660">
    <property type="entry name" value="Pseudouridine synthase I, catalytic domain, C-terminal subdomain"/>
    <property type="match status" value="1"/>
</dbReference>
<dbReference type="Gene3D" id="3.30.70.580">
    <property type="entry name" value="Pseudouridine synthase I, catalytic domain, N-terminal subdomain"/>
    <property type="match status" value="1"/>
</dbReference>
<dbReference type="HAMAP" id="MF_00171">
    <property type="entry name" value="TruA"/>
    <property type="match status" value="1"/>
</dbReference>
<dbReference type="InterPro" id="IPR020103">
    <property type="entry name" value="PsdUridine_synth_cat_dom_sf"/>
</dbReference>
<dbReference type="InterPro" id="IPR001406">
    <property type="entry name" value="PsdUridine_synth_TruA"/>
</dbReference>
<dbReference type="InterPro" id="IPR020097">
    <property type="entry name" value="PsdUridine_synth_TruA_a/b_dom"/>
</dbReference>
<dbReference type="InterPro" id="IPR020095">
    <property type="entry name" value="PsdUridine_synth_TruA_C"/>
</dbReference>
<dbReference type="InterPro" id="IPR020094">
    <property type="entry name" value="TruA/RsuA/RluB/E/F_N"/>
</dbReference>
<dbReference type="NCBIfam" id="TIGR00071">
    <property type="entry name" value="hisT_truA"/>
    <property type="match status" value="1"/>
</dbReference>
<dbReference type="PANTHER" id="PTHR11142">
    <property type="entry name" value="PSEUDOURIDYLATE SYNTHASE"/>
    <property type="match status" value="1"/>
</dbReference>
<dbReference type="PANTHER" id="PTHR11142:SF0">
    <property type="entry name" value="TRNA PSEUDOURIDINE SYNTHASE-LIKE 1"/>
    <property type="match status" value="1"/>
</dbReference>
<dbReference type="Pfam" id="PF01416">
    <property type="entry name" value="PseudoU_synth_1"/>
    <property type="match status" value="2"/>
</dbReference>
<dbReference type="PIRSF" id="PIRSF001430">
    <property type="entry name" value="tRNA_psdUrid_synth"/>
    <property type="match status" value="1"/>
</dbReference>
<dbReference type="SUPFAM" id="SSF55120">
    <property type="entry name" value="Pseudouridine synthase"/>
    <property type="match status" value="1"/>
</dbReference>
<comment type="function">
    <text evidence="1">Formation of pseudouridine at positions 38, 39 and 40 in the anticodon stem and loop of transfer RNAs.</text>
</comment>
<comment type="catalytic activity">
    <reaction evidence="1">
        <text>uridine(38/39/40) in tRNA = pseudouridine(38/39/40) in tRNA</text>
        <dbReference type="Rhea" id="RHEA:22376"/>
        <dbReference type="Rhea" id="RHEA-COMP:10085"/>
        <dbReference type="Rhea" id="RHEA-COMP:10087"/>
        <dbReference type="ChEBI" id="CHEBI:65314"/>
        <dbReference type="ChEBI" id="CHEBI:65315"/>
        <dbReference type="EC" id="5.4.99.12"/>
    </reaction>
</comment>
<comment type="subunit">
    <text evidence="1">Homodimer.</text>
</comment>
<comment type="similarity">
    <text evidence="1">Belongs to the tRNA pseudouridine synthase TruA family.</text>
</comment>
<sequence>MSGQQSSAVYKIALGIEYDGSKYYGWQRQNEVRSVQEKLEKALSQVANEPINVFCAGRTDAGVHGTGQVVHFETTALRKDAAWTLGVNANLPGDIAVRWVKTVPDDFHARFSATARRYRYIIYNHRLRPAVLAKGVTHYYEPLDAERMHRAAQCLLGENDFTSFRAVQCQSRTPWRNVMHINVTRHGPYVVVDIKANAFVHHMVRNIVGSLLEVGAHNQPESWIAELLAARDRTLAAATAKAEGLYLVAVDYPDRFDLPKPPMGPLFLAD</sequence>
<keyword id="KW-0413">Isomerase</keyword>
<keyword id="KW-1185">Reference proteome</keyword>
<keyword id="KW-0819">tRNA processing</keyword>
<name>TRUA_SALTY</name>
<evidence type="ECO:0000255" key="1">
    <source>
        <dbReference type="HAMAP-Rule" id="MF_00171"/>
    </source>
</evidence>
<gene>
    <name evidence="1" type="primary">truA</name>
    <name type="ordered locus">STM2368</name>
</gene>
<accession>Q8ZNB9</accession>
<reference key="1">
    <citation type="journal article" date="2001" name="Nature">
        <title>Complete genome sequence of Salmonella enterica serovar Typhimurium LT2.</title>
        <authorList>
            <person name="McClelland M."/>
            <person name="Sanderson K.E."/>
            <person name="Spieth J."/>
            <person name="Clifton S.W."/>
            <person name="Latreille P."/>
            <person name="Courtney L."/>
            <person name="Porwollik S."/>
            <person name="Ali J."/>
            <person name="Dante M."/>
            <person name="Du F."/>
            <person name="Hou S."/>
            <person name="Layman D."/>
            <person name="Leonard S."/>
            <person name="Nguyen C."/>
            <person name="Scott K."/>
            <person name="Holmes A."/>
            <person name="Grewal N."/>
            <person name="Mulvaney E."/>
            <person name="Ryan E."/>
            <person name="Sun H."/>
            <person name="Florea L."/>
            <person name="Miller W."/>
            <person name="Stoneking T."/>
            <person name="Nhan M."/>
            <person name="Waterston R."/>
            <person name="Wilson R.K."/>
        </authorList>
    </citation>
    <scope>NUCLEOTIDE SEQUENCE [LARGE SCALE GENOMIC DNA]</scope>
    <source>
        <strain>LT2 / SGSC1412 / ATCC 700720</strain>
    </source>
</reference>
<protein>
    <recommendedName>
        <fullName evidence="1">tRNA pseudouridine synthase A</fullName>
        <ecNumber evidence="1">5.4.99.12</ecNumber>
    </recommendedName>
    <alternativeName>
        <fullName evidence="1">tRNA pseudouridine(38-40) synthase</fullName>
    </alternativeName>
    <alternativeName>
        <fullName evidence="1">tRNA pseudouridylate synthase I</fullName>
    </alternativeName>
    <alternativeName>
        <fullName evidence="1">tRNA-uridine isomerase I</fullName>
    </alternativeName>
</protein>